<protein>
    <recommendedName>
        <fullName evidence="4">Inner membrane protein H108R</fullName>
        <shortName>pH108R</shortName>
    </recommendedName>
</protein>
<dbReference type="EMBL" id="AY261366">
    <property type="status" value="NOT_ANNOTATED_CDS"/>
    <property type="molecule type" value="Genomic_DNA"/>
</dbReference>
<dbReference type="Proteomes" id="UP000000858">
    <property type="component" value="Segment"/>
</dbReference>
<dbReference type="GO" id="GO:0016020">
    <property type="term" value="C:membrane"/>
    <property type="evidence" value="ECO:0007669"/>
    <property type="project" value="UniProtKB-KW"/>
</dbReference>
<dbReference type="GO" id="GO:0055036">
    <property type="term" value="C:virion membrane"/>
    <property type="evidence" value="ECO:0007669"/>
    <property type="project" value="UniProtKB-SubCell"/>
</dbReference>
<gene>
    <name type="ordered locus">War-127</name>
</gene>
<proteinExistence type="inferred from homology"/>
<reference key="1">
    <citation type="submission" date="2003-03" db="EMBL/GenBank/DDBJ databases">
        <title>African swine fever virus genomes.</title>
        <authorList>
            <person name="Kutish G.F."/>
            <person name="Rock D.L."/>
        </authorList>
    </citation>
    <scope>NUCLEOTIDE SEQUENCE [LARGE SCALE GENOMIC DNA]</scope>
</reference>
<sequence length="108" mass="12515">MVNLFPVFTLIVIITILITTRELSTTMLIVSLVTDYIIINTQYTEQQHENNTFSMPQKNSFSESYNKDKKSNTHIPYQWLAPELKEAESKYWWGNYDPHSEPVLAGAS</sequence>
<accession>P0CA15</accession>
<feature type="chain" id="PRO_0000373474" description="Inner membrane protein H108R">
    <location>
        <begin position="1"/>
        <end position="108"/>
    </location>
</feature>
<feature type="transmembrane region" description="Helical" evidence="2">
    <location>
        <begin position="10"/>
        <end position="32"/>
    </location>
</feature>
<feature type="region of interest" description="Disordered" evidence="3">
    <location>
        <begin position="49"/>
        <end position="69"/>
    </location>
</feature>
<feature type="compositionally biased region" description="Polar residues" evidence="3">
    <location>
        <begin position="49"/>
        <end position="64"/>
    </location>
</feature>
<feature type="glycosylation site" description="N-linked (GlcNAc...) asparagine; by host" evidence="2">
    <location>
        <position position="50"/>
    </location>
</feature>
<organism>
    <name type="scientific">African swine fever virus (isolate Warthog/Namibia/Wart80/1980)</name>
    <name type="common">ASFV</name>
    <dbReference type="NCBI Taxonomy" id="561444"/>
    <lineage>
        <taxon>Viruses</taxon>
        <taxon>Varidnaviria</taxon>
        <taxon>Bamfordvirae</taxon>
        <taxon>Nucleocytoviricota</taxon>
        <taxon>Pokkesviricetes</taxon>
        <taxon>Asfuvirales</taxon>
        <taxon>Asfarviridae</taxon>
        <taxon>Asfivirus</taxon>
        <taxon>African swine fever virus</taxon>
    </lineage>
</organism>
<organismHost>
    <name type="scientific">Ornithodoros</name>
    <name type="common">relapsing fever ticks</name>
    <dbReference type="NCBI Taxonomy" id="6937"/>
</organismHost>
<organismHost>
    <name type="scientific">Phacochoerus aethiopicus</name>
    <name type="common">Warthog</name>
    <dbReference type="NCBI Taxonomy" id="85517"/>
</organismHost>
<organismHost>
    <name type="scientific">Phacochoerus africanus</name>
    <name type="common">Warthog</name>
    <dbReference type="NCBI Taxonomy" id="41426"/>
</organismHost>
<organismHost>
    <name type="scientific">Potamochoerus larvatus</name>
    <name type="common">Bushpig</name>
    <dbReference type="NCBI Taxonomy" id="273792"/>
</organismHost>
<organismHost>
    <name type="scientific">Sus scrofa</name>
    <name type="common">Pig</name>
    <dbReference type="NCBI Taxonomy" id="9823"/>
</organismHost>
<evidence type="ECO:0000250" key="1">
    <source>
        <dbReference type="UniProtKB" id="Q65188"/>
    </source>
</evidence>
<evidence type="ECO:0000255" key="2"/>
<evidence type="ECO:0000256" key="3">
    <source>
        <dbReference type="SAM" id="MobiDB-lite"/>
    </source>
</evidence>
<evidence type="ECO:0000305" key="4"/>
<keyword id="KW-0325">Glycoprotein</keyword>
<keyword id="KW-0426">Late protein</keyword>
<keyword id="KW-0472">Membrane</keyword>
<keyword id="KW-0812">Transmembrane</keyword>
<keyword id="KW-1133">Transmembrane helix</keyword>
<keyword id="KW-0946">Virion</keyword>
<comment type="subcellular location">
    <subcellularLocation>
        <location evidence="1">Virion membrane</location>
        <topology evidence="4">Single-pass membrane protein</topology>
    </subcellularLocation>
    <text evidence="1">Detected mainly on membrane-like structures within viral factories (By similarity). Probably part of the inner envelope (By similarity).</text>
</comment>
<comment type="induction">
    <text evidence="4">Expressed in the late phase of the viral replicative cycle.</text>
</comment>
<comment type="similarity">
    <text evidence="4">Belongs to the asfivirus H108R family.</text>
</comment>
<name>VF108_ASFWA</name>